<keyword id="KW-0067">ATP-binding</keyword>
<keyword id="KW-0547">Nucleotide-binding</keyword>
<keyword id="KW-1185">Reference proteome</keyword>
<feature type="chain" id="PRO_0000316850" description="Dephospho-CoA kinase domain-containing protein">
    <location>
        <begin position="1"/>
        <end position="231"/>
    </location>
</feature>
<feature type="domain" description="DPCK">
    <location>
        <begin position="3"/>
        <end position="207"/>
    </location>
</feature>
<feature type="binding site" evidence="1">
    <location>
        <begin position="8"/>
        <end position="15"/>
    </location>
    <ligand>
        <name>ATP</name>
        <dbReference type="ChEBI" id="CHEBI:30616"/>
    </ligand>
</feature>
<accession>Q8BHC4</accession>
<name>DCAKD_MOUSE</name>
<sequence>MFLVGLTGGIASGKSSVIQVFQQLGCAVIDVDVIARHVVQPGYPAHRRIVEAFGTEVLLENGDIDRKVLGDLIFNQPDRRQLLNSITHPEIRKEMMKETFKYFLRGYRYVILDIPLLFETKKLLKYMKHTVVVYCDRDTQLARLMKRNNLNREDAEARINAQLPLKDKARMANHVLDNSGEWSLTRRQAILLHAKLERSMEYLPLRLGFLTGLAGIASLLYLLTRYLLPSP</sequence>
<organism>
    <name type="scientific">Mus musculus</name>
    <name type="common">Mouse</name>
    <dbReference type="NCBI Taxonomy" id="10090"/>
    <lineage>
        <taxon>Eukaryota</taxon>
        <taxon>Metazoa</taxon>
        <taxon>Chordata</taxon>
        <taxon>Craniata</taxon>
        <taxon>Vertebrata</taxon>
        <taxon>Euteleostomi</taxon>
        <taxon>Mammalia</taxon>
        <taxon>Eutheria</taxon>
        <taxon>Euarchontoglires</taxon>
        <taxon>Glires</taxon>
        <taxon>Rodentia</taxon>
        <taxon>Myomorpha</taxon>
        <taxon>Muroidea</taxon>
        <taxon>Muridae</taxon>
        <taxon>Murinae</taxon>
        <taxon>Mus</taxon>
        <taxon>Mus</taxon>
    </lineage>
</organism>
<gene>
    <name type="primary">Dcakd</name>
</gene>
<dbReference type="EMBL" id="AK051022">
    <property type="protein sequence ID" value="BAC34499.1"/>
    <property type="molecule type" value="mRNA"/>
</dbReference>
<dbReference type="EMBL" id="AK078460">
    <property type="protein sequence ID" value="BAC37286.1"/>
    <property type="molecule type" value="mRNA"/>
</dbReference>
<dbReference type="EMBL" id="AK162069">
    <property type="protein sequence ID" value="BAE36709.1"/>
    <property type="molecule type" value="mRNA"/>
</dbReference>
<dbReference type="EMBL" id="AK170762">
    <property type="protein sequence ID" value="BAE42013.1"/>
    <property type="molecule type" value="mRNA"/>
</dbReference>
<dbReference type="EMBL" id="AL731670">
    <property type="status" value="NOT_ANNOTATED_CDS"/>
    <property type="molecule type" value="Genomic_DNA"/>
</dbReference>
<dbReference type="EMBL" id="BC005607">
    <property type="protein sequence ID" value="AAH05607.1"/>
    <property type="molecule type" value="mRNA"/>
</dbReference>
<dbReference type="EMBL" id="BC045193">
    <property type="protein sequence ID" value="AAH45193.1"/>
    <property type="molecule type" value="mRNA"/>
</dbReference>
<dbReference type="CCDS" id="CCDS25510.1"/>
<dbReference type="RefSeq" id="NP_001404928.1">
    <property type="nucleotide sequence ID" value="NM_001417999.1"/>
</dbReference>
<dbReference type="RefSeq" id="NP_080827.2">
    <property type="nucleotide sequence ID" value="NM_026551.3"/>
</dbReference>
<dbReference type="RefSeq" id="XP_006534101.1">
    <property type="nucleotide sequence ID" value="XM_006534038.2"/>
</dbReference>
<dbReference type="SMR" id="Q8BHC4"/>
<dbReference type="BioGRID" id="212648">
    <property type="interactions" value="6"/>
</dbReference>
<dbReference type="FunCoup" id="Q8BHC4">
    <property type="interactions" value="1807"/>
</dbReference>
<dbReference type="IntAct" id="Q8BHC4">
    <property type="interactions" value="1"/>
</dbReference>
<dbReference type="STRING" id="10090.ENSMUSP00000021313"/>
<dbReference type="iPTMnet" id="Q8BHC4"/>
<dbReference type="PhosphoSitePlus" id="Q8BHC4"/>
<dbReference type="SwissPalm" id="Q8BHC4"/>
<dbReference type="jPOST" id="Q8BHC4"/>
<dbReference type="PaxDb" id="10090-ENSMUSP00000021313"/>
<dbReference type="PeptideAtlas" id="Q8BHC4"/>
<dbReference type="ProteomicsDB" id="279173"/>
<dbReference type="Pumba" id="Q8BHC4"/>
<dbReference type="Antibodypedia" id="29945">
    <property type="antibodies" value="173 antibodies from 20 providers"/>
</dbReference>
<dbReference type="DNASU" id="68087"/>
<dbReference type="Ensembl" id="ENSMUST00000021313.9">
    <property type="protein sequence ID" value="ENSMUSP00000021313.3"/>
    <property type="gene ID" value="ENSMUSG00000020935.9"/>
</dbReference>
<dbReference type="GeneID" id="68087"/>
<dbReference type="KEGG" id="mmu:68087"/>
<dbReference type="UCSC" id="uc007ltc.1">
    <property type="organism name" value="mouse"/>
</dbReference>
<dbReference type="AGR" id="MGI:1915337"/>
<dbReference type="CTD" id="79877"/>
<dbReference type="MGI" id="MGI:1915337">
    <property type="gene designation" value="Dcakd"/>
</dbReference>
<dbReference type="VEuPathDB" id="HostDB:ENSMUSG00000020935"/>
<dbReference type="eggNOG" id="KOG3220">
    <property type="taxonomic scope" value="Eukaryota"/>
</dbReference>
<dbReference type="GeneTree" id="ENSGT00550000075038"/>
<dbReference type="HOGENOM" id="CLU_057180_0_0_1"/>
<dbReference type="InParanoid" id="Q8BHC4"/>
<dbReference type="OMA" id="CQMDIEQ"/>
<dbReference type="OrthoDB" id="247245at2759"/>
<dbReference type="PhylomeDB" id="Q8BHC4"/>
<dbReference type="TreeFam" id="TF314815"/>
<dbReference type="Reactome" id="R-MMU-196783">
    <property type="pathway name" value="Coenzyme A biosynthesis"/>
</dbReference>
<dbReference type="BioGRID-ORCS" id="68087">
    <property type="hits" value="2 hits in 78 CRISPR screens"/>
</dbReference>
<dbReference type="ChiTaRS" id="Dcakd">
    <property type="organism name" value="mouse"/>
</dbReference>
<dbReference type="PRO" id="PR:Q8BHC4"/>
<dbReference type="Proteomes" id="UP000000589">
    <property type="component" value="Chromosome 11"/>
</dbReference>
<dbReference type="RNAct" id="Q8BHC4">
    <property type="molecule type" value="protein"/>
</dbReference>
<dbReference type="Bgee" id="ENSMUSG00000020935">
    <property type="expression patterns" value="Expressed in dorsal pancreas and 241 other cell types or tissues"/>
</dbReference>
<dbReference type="ExpressionAtlas" id="Q8BHC4">
    <property type="expression patterns" value="baseline and differential"/>
</dbReference>
<dbReference type="GO" id="GO:0005739">
    <property type="term" value="C:mitochondrion"/>
    <property type="evidence" value="ECO:0007005"/>
    <property type="project" value="MGI"/>
</dbReference>
<dbReference type="GO" id="GO:0005524">
    <property type="term" value="F:ATP binding"/>
    <property type="evidence" value="ECO:0007669"/>
    <property type="project" value="UniProtKB-KW"/>
</dbReference>
<dbReference type="GO" id="GO:0004140">
    <property type="term" value="F:dephospho-CoA kinase activity"/>
    <property type="evidence" value="ECO:0007669"/>
    <property type="project" value="InterPro"/>
</dbReference>
<dbReference type="GO" id="GO:0015937">
    <property type="term" value="P:coenzyme A biosynthetic process"/>
    <property type="evidence" value="ECO:0007669"/>
    <property type="project" value="InterPro"/>
</dbReference>
<dbReference type="CDD" id="cd02022">
    <property type="entry name" value="DPCK"/>
    <property type="match status" value="1"/>
</dbReference>
<dbReference type="FunFam" id="3.40.50.300:FF:000485">
    <property type="entry name" value="Dephospho-CoA kinase CAB5"/>
    <property type="match status" value="1"/>
</dbReference>
<dbReference type="Gene3D" id="3.40.50.300">
    <property type="entry name" value="P-loop containing nucleotide triphosphate hydrolases"/>
    <property type="match status" value="1"/>
</dbReference>
<dbReference type="HAMAP" id="MF_00376">
    <property type="entry name" value="Dephospho_CoA_kinase"/>
    <property type="match status" value="1"/>
</dbReference>
<dbReference type="InterPro" id="IPR001977">
    <property type="entry name" value="Depp_CoAkinase"/>
</dbReference>
<dbReference type="InterPro" id="IPR027417">
    <property type="entry name" value="P-loop_NTPase"/>
</dbReference>
<dbReference type="NCBIfam" id="TIGR00152">
    <property type="entry name" value="dephospho-CoA kinase"/>
    <property type="match status" value="1"/>
</dbReference>
<dbReference type="PANTHER" id="PTHR10695:SF46">
    <property type="entry name" value="BIFUNCTIONAL COENZYME A SYNTHASE-RELATED"/>
    <property type="match status" value="1"/>
</dbReference>
<dbReference type="PANTHER" id="PTHR10695">
    <property type="entry name" value="DEPHOSPHO-COA KINASE-RELATED"/>
    <property type="match status" value="1"/>
</dbReference>
<dbReference type="Pfam" id="PF01121">
    <property type="entry name" value="CoaE"/>
    <property type="match status" value="1"/>
</dbReference>
<dbReference type="SUPFAM" id="SSF52540">
    <property type="entry name" value="P-loop containing nucleoside triphosphate hydrolases"/>
    <property type="match status" value="1"/>
</dbReference>
<dbReference type="PROSITE" id="PS51219">
    <property type="entry name" value="DPCK"/>
    <property type="match status" value="1"/>
</dbReference>
<protein>
    <recommendedName>
        <fullName>Dephospho-CoA kinase domain-containing protein</fullName>
    </recommendedName>
</protein>
<proteinExistence type="evidence at protein level"/>
<evidence type="ECO:0000255" key="1"/>
<evidence type="ECO:0000305" key="2"/>
<comment type="similarity">
    <text evidence="2">Belongs to the CoaE family.</text>
</comment>
<reference key="1">
    <citation type="journal article" date="2005" name="Science">
        <title>The transcriptional landscape of the mammalian genome.</title>
        <authorList>
            <person name="Carninci P."/>
            <person name="Kasukawa T."/>
            <person name="Katayama S."/>
            <person name="Gough J."/>
            <person name="Frith M.C."/>
            <person name="Maeda N."/>
            <person name="Oyama R."/>
            <person name="Ravasi T."/>
            <person name="Lenhard B."/>
            <person name="Wells C."/>
            <person name="Kodzius R."/>
            <person name="Shimokawa K."/>
            <person name="Bajic V.B."/>
            <person name="Brenner S.E."/>
            <person name="Batalov S."/>
            <person name="Forrest A.R."/>
            <person name="Zavolan M."/>
            <person name="Davis M.J."/>
            <person name="Wilming L.G."/>
            <person name="Aidinis V."/>
            <person name="Allen J.E."/>
            <person name="Ambesi-Impiombato A."/>
            <person name="Apweiler R."/>
            <person name="Aturaliya R.N."/>
            <person name="Bailey T.L."/>
            <person name="Bansal M."/>
            <person name="Baxter L."/>
            <person name="Beisel K.W."/>
            <person name="Bersano T."/>
            <person name="Bono H."/>
            <person name="Chalk A.M."/>
            <person name="Chiu K.P."/>
            <person name="Choudhary V."/>
            <person name="Christoffels A."/>
            <person name="Clutterbuck D.R."/>
            <person name="Crowe M.L."/>
            <person name="Dalla E."/>
            <person name="Dalrymple B.P."/>
            <person name="de Bono B."/>
            <person name="Della Gatta G."/>
            <person name="di Bernardo D."/>
            <person name="Down T."/>
            <person name="Engstrom P."/>
            <person name="Fagiolini M."/>
            <person name="Faulkner G."/>
            <person name="Fletcher C.F."/>
            <person name="Fukushima T."/>
            <person name="Furuno M."/>
            <person name="Futaki S."/>
            <person name="Gariboldi M."/>
            <person name="Georgii-Hemming P."/>
            <person name="Gingeras T.R."/>
            <person name="Gojobori T."/>
            <person name="Green R.E."/>
            <person name="Gustincich S."/>
            <person name="Harbers M."/>
            <person name="Hayashi Y."/>
            <person name="Hensch T.K."/>
            <person name="Hirokawa N."/>
            <person name="Hill D."/>
            <person name="Huminiecki L."/>
            <person name="Iacono M."/>
            <person name="Ikeo K."/>
            <person name="Iwama A."/>
            <person name="Ishikawa T."/>
            <person name="Jakt M."/>
            <person name="Kanapin A."/>
            <person name="Katoh M."/>
            <person name="Kawasawa Y."/>
            <person name="Kelso J."/>
            <person name="Kitamura H."/>
            <person name="Kitano H."/>
            <person name="Kollias G."/>
            <person name="Krishnan S.P."/>
            <person name="Kruger A."/>
            <person name="Kummerfeld S.K."/>
            <person name="Kurochkin I.V."/>
            <person name="Lareau L.F."/>
            <person name="Lazarevic D."/>
            <person name="Lipovich L."/>
            <person name="Liu J."/>
            <person name="Liuni S."/>
            <person name="McWilliam S."/>
            <person name="Madan Babu M."/>
            <person name="Madera M."/>
            <person name="Marchionni L."/>
            <person name="Matsuda H."/>
            <person name="Matsuzawa S."/>
            <person name="Miki H."/>
            <person name="Mignone F."/>
            <person name="Miyake S."/>
            <person name="Morris K."/>
            <person name="Mottagui-Tabar S."/>
            <person name="Mulder N."/>
            <person name="Nakano N."/>
            <person name="Nakauchi H."/>
            <person name="Ng P."/>
            <person name="Nilsson R."/>
            <person name="Nishiguchi S."/>
            <person name="Nishikawa S."/>
            <person name="Nori F."/>
            <person name="Ohara O."/>
            <person name="Okazaki Y."/>
            <person name="Orlando V."/>
            <person name="Pang K.C."/>
            <person name="Pavan W.J."/>
            <person name="Pavesi G."/>
            <person name="Pesole G."/>
            <person name="Petrovsky N."/>
            <person name="Piazza S."/>
            <person name="Reed J."/>
            <person name="Reid J.F."/>
            <person name="Ring B.Z."/>
            <person name="Ringwald M."/>
            <person name="Rost B."/>
            <person name="Ruan Y."/>
            <person name="Salzberg S.L."/>
            <person name="Sandelin A."/>
            <person name="Schneider C."/>
            <person name="Schoenbach C."/>
            <person name="Sekiguchi K."/>
            <person name="Semple C.A."/>
            <person name="Seno S."/>
            <person name="Sessa L."/>
            <person name="Sheng Y."/>
            <person name="Shibata Y."/>
            <person name="Shimada H."/>
            <person name="Shimada K."/>
            <person name="Silva D."/>
            <person name="Sinclair B."/>
            <person name="Sperling S."/>
            <person name="Stupka E."/>
            <person name="Sugiura K."/>
            <person name="Sultana R."/>
            <person name="Takenaka Y."/>
            <person name="Taki K."/>
            <person name="Tammoja K."/>
            <person name="Tan S.L."/>
            <person name="Tang S."/>
            <person name="Taylor M.S."/>
            <person name="Tegner J."/>
            <person name="Teichmann S.A."/>
            <person name="Ueda H.R."/>
            <person name="van Nimwegen E."/>
            <person name="Verardo R."/>
            <person name="Wei C.L."/>
            <person name="Yagi K."/>
            <person name="Yamanishi H."/>
            <person name="Zabarovsky E."/>
            <person name="Zhu S."/>
            <person name="Zimmer A."/>
            <person name="Hide W."/>
            <person name="Bult C."/>
            <person name="Grimmond S.M."/>
            <person name="Teasdale R.D."/>
            <person name="Liu E.T."/>
            <person name="Brusic V."/>
            <person name="Quackenbush J."/>
            <person name="Wahlestedt C."/>
            <person name="Mattick J.S."/>
            <person name="Hume D.A."/>
            <person name="Kai C."/>
            <person name="Sasaki D."/>
            <person name="Tomaru Y."/>
            <person name="Fukuda S."/>
            <person name="Kanamori-Katayama M."/>
            <person name="Suzuki M."/>
            <person name="Aoki J."/>
            <person name="Arakawa T."/>
            <person name="Iida J."/>
            <person name="Imamura K."/>
            <person name="Itoh M."/>
            <person name="Kato T."/>
            <person name="Kawaji H."/>
            <person name="Kawagashira N."/>
            <person name="Kawashima T."/>
            <person name="Kojima M."/>
            <person name="Kondo S."/>
            <person name="Konno H."/>
            <person name="Nakano K."/>
            <person name="Ninomiya N."/>
            <person name="Nishio T."/>
            <person name="Okada M."/>
            <person name="Plessy C."/>
            <person name="Shibata K."/>
            <person name="Shiraki T."/>
            <person name="Suzuki S."/>
            <person name="Tagami M."/>
            <person name="Waki K."/>
            <person name="Watahiki A."/>
            <person name="Okamura-Oho Y."/>
            <person name="Suzuki H."/>
            <person name="Kawai J."/>
            <person name="Hayashizaki Y."/>
        </authorList>
    </citation>
    <scope>NUCLEOTIDE SEQUENCE [LARGE SCALE MRNA]</scope>
    <source>
        <strain>C57BL/6J</strain>
        <strain>NOD</strain>
    </source>
</reference>
<reference key="2">
    <citation type="journal article" date="2009" name="PLoS Biol.">
        <title>Lineage-specific biology revealed by a finished genome assembly of the mouse.</title>
        <authorList>
            <person name="Church D.M."/>
            <person name="Goodstadt L."/>
            <person name="Hillier L.W."/>
            <person name="Zody M.C."/>
            <person name="Goldstein S."/>
            <person name="She X."/>
            <person name="Bult C.J."/>
            <person name="Agarwala R."/>
            <person name="Cherry J.L."/>
            <person name="DiCuccio M."/>
            <person name="Hlavina W."/>
            <person name="Kapustin Y."/>
            <person name="Meric P."/>
            <person name="Maglott D."/>
            <person name="Birtle Z."/>
            <person name="Marques A.C."/>
            <person name="Graves T."/>
            <person name="Zhou S."/>
            <person name="Teague B."/>
            <person name="Potamousis K."/>
            <person name="Churas C."/>
            <person name="Place M."/>
            <person name="Herschleb J."/>
            <person name="Runnheim R."/>
            <person name="Forrest D."/>
            <person name="Amos-Landgraf J."/>
            <person name="Schwartz D.C."/>
            <person name="Cheng Z."/>
            <person name="Lindblad-Toh K."/>
            <person name="Eichler E.E."/>
            <person name="Ponting C.P."/>
        </authorList>
    </citation>
    <scope>NUCLEOTIDE SEQUENCE [LARGE SCALE GENOMIC DNA]</scope>
    <source>
        <strain>C57BL/6J</strain>
    </source>
</reference>
<reference key="3">
    <citation type="journal article" date="2004" name="Genome Res.">
        <title>The status, quality, and expansion of the NIH full-length cDNA project: the Mammalian Gene Collection (MGC).</title>
        <authorList>
            <consortium name="The MGC Project Team"/>
        </authorList>
    </citation>
    <scope>NUCLEOTIDE SEQUENCE [LARGE SCALE MRNA]</scope>
    <source>
        <strain>FVB/N</strain>
        <tissue>Eye</tissue>
        <tissue>Mammary tumor</tissue>
    </source>
</reference>
<reference key="4">
    <citation type="journal article" date="2010" name="Cell">
        <title>A tissue-specific atlas of mouse protein phosphorylation and expression.</title>
        <authorList>
            <person name="Huttlin E.L."/>
            <person name="Jedrychowski M.P."/>
            <person name="Elias J.E."/>
            <person name="Goswami T."/>
            <person name="Rad R."/>
            <person name="Beausoleil S.A."/>
            <person name="Villen J."/>
            <person name="Haas W."/>
            <person name="Sowa M.E."/>
            <person name="Gygi S.P."/>
        </authorList>
    </citation>
    <scope>IDENTIFICATION BY MASS SPECTROMETRY [LARGE SCALE ANALYSIS]</scope>
    <source>
        <tissue>Brain</tissue>
        <tissue>Brown adipose tissue</tissue>
        <tissue>Heart</tissue>
        <tissue>Kidney</tissue>
        <tissue>Liver</tissue>
        <tissue>Lung</tissue>
        <tissue>Pancreas</tissue>
        <tissue>Spleen</tissue>
        <tissue>Testis</tissue>
    </source>
</reference>